<sequence>MRKNSIKNTRINQEVQKELSMLISRELKDPRINPMTSIVAVEVAPDLKTAKVYISVLGDELSQKNTLAGLKSAAPFLRGQLARGINLRNTPELLFVVDQSIEYGVSMSKLINEVNAGNHKASDEEESDDKGHEDEQ</sequence>
<dbReference type="EMBL" id="CP000885">
    <property type="protein sequence ID" value="ABX43133.1"/>
    <property type="molecule type" value="Genomic_DNA"/>
</dbReference>
<dbReference type="RefSeq" id="WP_012200784.1">
    <property type="nucleotide sequence ID" value="NC_010001.1"/>
</dbReference>
<dbReference type="SMR" id="A9KNW3"/>
<dbReference type="STRING" id="357809.Cphy_2773"/>
<dbReference type="KEGG" id="cpy:Cphy_2773"/>
<dbReference type="eggNOG" id="COG0858">
    <property type="taxonomic scope" value="Bacteria"/>
</dbReference>
<dbReference type="HOGENOM" id="CLU_089475_6_3_9"/>
<dbReference type="OrthoDB" id="307788at2"/>
<dbReference type="Proteomes" id="UP000000370">
    <property type="component" value="Chromosome"/>
</dbReference>
<dbReference type="GO" id="GO:0005829">
    <property type="term" value="C:cytosol"/>
    <property type="evidence" value="ECO:0007669"/>
    <property type="project" value="TreeGrafter"/>
</dbReference>
<dbReference type="GO" id="GO:0043024">
    <property type="term" value="F:ribosomal small subunit binding"/>
    <property type="evidence" value="ECO:0007669"/>
    <property type="project" value="TreeGrafter"/>
</dbReference>
<dbReference type="GO" id="GO:0030490">
    <property type="term" value="P:maturation of SSU-rRNA"/>
    <property type="evidence" value="ECO:0007669"/>
    <property type="project" value="UniProtKB-UniRule"/>
</dbReference>
<dbReference type="Gene3D" id="3.30.300.20">
    <property type="match status" value="1"/>
</dbReference>
<dbReference type="HAMAP" id="MF_00003">
    <property type="entry name" value="RbfA"/>
    <property type="match status" value="1"/>
</dbReference>
<dbReference type="InterPro" id="IPR015946">
    <property type="entry name" value="KH_dom-like_a/b"/>
</dbReference>
<dbReference type="InterPro" id="IPR000238">
    <property type="entry name" value="RbfA"/>
</dbReference>
<dbReference type="InterPro" id="IPR023799">
    <property type="entry name" value="RbfA_dom_sf"/>
</dbReference>
<dbReference type="InterPro" id="IPR020053">
    <property type="entry name" value="Ribosome-bd_factorA_CS"/>
</dbReference>
<dbReference type="NCBIfam" id="TIGR00082">
    <property type="entry name" value="rbfA"/>
    <property type="match status" value="1"/>
</dbReference>
<dbReference type="PANTHER" id="PTHR33515">
    <property type="entry name" value="RIBOSOME-BINDING FACTOR A, CHLOROPLASTIC-RELATED"/>
    <property type="match status" value="1"/>
</dbReference>
<dbReference type="PANTHER" id="PTHR33515:SF1">
    <property type="entry name" value="RIBOSOME-BINDING FACTOR A, CHLOROPLASTIC-RELATED"/>
    <property type="match status" value="1"/>
</dbReference>
<dbReference type="Pfam" id="PF02033">
    <property type="entry name" value="RBFA"/>
    <property type="match status" value="1"/>
</dbReference>
<dbReference type="SUPFAM" id="SSF89919">
    <property type="entry name" value="Ribosome-binding factor A, RbfA"/>
    <property type="match status" value="1"/>
</dbReference>
<dbReference type="PROSITE" id="PS01319">
    <property type="entry name" value="RBFA"/>
    <property type="match status" value="1"/>
</dbReference>
<evidence type="ECO:0000255" key="1">
    <source>
        <dbReference type="HAMAP-Rule" id="MF_00003"/>
    </source>
</evidence>
<evidence type="ECO:0000256" key="2">
    <source>
        <dbReference type="SAM" id="MobiDB-lite"/>
    </source>
</evidence>
<reference key="1">
    <citation type="submission" date="2007-11" db="EMBL/GenBank/DDBJ databases">
        <title>Complete genome sequence of Clostridium phytofermentans ISDg.</title>
        <authorList>
            <person name="Leschine S.B."/>
            <person name="Warnick T.A."/>
            <person name="Blanchard J.L."/>
            <person name="Schnell D.J."/>
            <person name="Petit E.L."/>
            <person name="LaTouf W.G."/>
            <person name="Copeland A."/>
            <person name="Lucas S."/>
            <person name="Lapidus A."/>
            <person name="Barry K."/>
            <person name="Glavina del Rio T."/>
            <person name="Dalin E."/>
            <person name="Tice H."/>
            <person name="Pitluck S."/>
            <person name="Kiss H."/>
            <person name="Brettin T."/>
            <person name="Bruce D."/>
            <person name="Detter J.C."/>
            <person name="Han C."/>
            <person name="Kuske C."/>
            <person name="Schmutz J."/>
            <person name="Larimer F."/>
            <person name="Land M."/>
            <person name="Hauser L."/>
            <person name="Kyrpides N."/>
            <person name="Kim E.A."/>
            <person name="Richardson P."/>
        </authorList>
    </citation>
    <scope>NUCLEOTIDE SEQUENCE [LARGE SCALE GENOMIC DNA]</scope>
    <source>
        <strain>ATCC 700394 / DSM 18823 / ISDg</strain>
    </source>
</reference>
<organism>
    <name type="scientific">Lachnoclostridium phytofermentans (strain ATCC 700394 / DSM 18823 / ISDg)</name>
    <name type="common">Clostridium phytofermentans</name>
    <dbReference type="NCBI Taxonomy" id="357809"/>
    <lineage>
        <taxon>Bacteria</taxon>
        <taxon>Bacillati</taxon>
        <taxon>Bacillota</taxon>
        <taxon>Clostridia</taxon>
        <taxon>Lachnospirales</taxon>
        <taxon>Lachnospiraceae</taxon>
    </lineage>
</organism>
<protein>
    <recommendedName>
        <fullName evidence="1">Ribosome-binding factor A</fullName>
    </recommendedName>
</protein>
<keyword id="KW-0963">Cytoplasm</keyword>
<keyword id="KW-1185">Reference proteome</keyword>
<keyword id="KW-0690">Ribosome biogenesis</keyword>
<comment type="function">
    <text evidence="1">One of several proteins that assist in the late maturation steps of the functional core of the 30S ribosomal subunit. Associates with free 30S ribosomal subunits (but not with 30S subunits that are part of 70S ribosomes or polysomes). Required for efficient processing of 16S rRNA. May interact with the 5'-terminal helix region of 16S rRNA.</text>
</comment>
<comment type="subunit">
    <text evidence="1">Monomer. Binds 30S ribosomal subunits, but not 50S ribosomal subunits or 70S ribosomes.</text>
</comment>
<comment type="subcellular location">
    <subcellularLocation>
        <location evidence="1">Cytoplasm</location>
    </subcellularLocation>
</comment>
<comment type="similarity">
    <text evidence="1">Belongs to the RbfA family.</text>
</comment>
<name>RBFA_LACP7</name>
<feature type="chain" id="PRO_0000334705" description="Ribosome-binding factor A">
    <location>
        <begin position="1"/>
        <end position="136"/>
    </location>
</feature>
<feature type="region of interest" description="Disordered" evidence="2">
    <location>
        <begin position="116"/>
        <end position="136"/>
    </location>
</feature>
<gene>
    <name evidence="1" type="primary">rbfA</name>
    <name type="ordered locus">Cphy_2773</name>
</gene>
<accession>A9KNW3</accession>
<proteinExistence type="inferred from homology"/>